<dbReference type="EC" id="3.2.1.52" evidence="1"/>
<dbReference type="EMBL" id="CP001138">
    <property type="protein sequence ID" value="ACH49871.1"/>
    <property type="molecule type" value="Genomic_DNA"/>
</dbReference>
<dbReference type="RefSeq" id="WP_000529340.1">
    <property type="nucleotide sequence ID" value="NC_011149.1"/>
</dbReference>
<dbReference type="SMR" id="B5F8E5"/>
<dbReference type="CAZy" id="GH3">
    <property type="family name" value="Glycoside Hydrolase Family 3"/>
</dbReference>
<dbReference type="KEGG" id="sea:SeAg_B1976"/>
<dbReference type="HOGENOM" id="CLU_008392_0_0_6"/>
<dbReference type="UniPathway" id="UPA00544"/>
<dbReference type="Proteomes" id="UP000008819">
    <property type="component" value="Chromosome"/>
</dbReference>
<dbReference type="GO" id="GO:0005737">
    <property type="term" value="C:cytoplasm"/>
    <property type="evidence" value="ECO:0007669"/>
    <property type="project" value="UniProtKB-SubCell"/>
</dbReference>
<dbReference type="GO" id="GO:0004563">
    <property type="term" value="F:beta-N-acetylhexosaminidase activity"/>
    <property type="evidence" value="ECO:0007669"/>
    <property type="project" value="UniProtKB-UniRule"/>
</dbReference>
<dbReference type="GO" id="GO:0005975">
    <property type="term" value="P:carbohydrate metabolic process"/>
    <property type="evidence" value="ECO:0007669"/>
    <property type="project" value="InterPro"/>
</dbReference>
<dbReference type="GO" id="GO:0051301">
    <property type="term" value="P:cell division"/>
    <property type="evidence" value="ECO:0007669"/>
    <property type="project" value="UniProtKB-KW"/>
</dbReference>
<dbReference type="GO" id="GO:0071555">
    <property type="term" value="P:cell wall organization"/>
    <property type="evidence" value="ECO:0007669"/>
    <property type="project" value="UniProtKB-KW"/>
</dbReference>
<dbReference type="GO" id="GO:0009252">
    <property type="term" value="P:peptidoglycan biosynthetic process"/>
    <property type="evidence" value="ECO:0007669"/>
    <property type="project" value="UniProtKB-KW"/>
</dbReference>
<dbReference type="GO" id="GO:0009254">
    <property type="term" value="P:peptidoglycan turnover"/>
    <property type="evidence" value="ECO:0007669"/>
    <property type="project" value="UniProtKB-UniRule"/>
</dbReference>
<dbReference type="GO" id="GO:0008360">
    <property type="term" value="P:regulation of cell shape"/>
    <property type="evidence" value="ECO:0007669"/>
    <property type="project" value="UniProtKB-KW"/>
</dbReference>
<dbReference type="FunFam" id="3.20.20.300:FF:000001">
    <property type="entry name" value="Beta-hexosaminidase"/>
    <property type="match status" value="1"/>
</dbReference>
<dbReference type="Gene3D" id="3.20.20.300">
    <property type="entry name" value="Glycoside hydrolase, family 3, N-terminal domain"/>
    <property type="match status" value="1"/>
</dbReference>
<dbReference type="HAMAP" id="MF_00364">
    <property type="entry name" value="NagZ"/>
    <property type="match status" value="1"/>
</dbReference>
<dbReference type="InterPro" id="IPR022956">
    <property type="entry name" value="Beta_hexosaminidase_bac"/>
</dbReference>
<dbReference type="InterPro" id="IPR019800">
    <property type="entry name" value="Glyco_hydro_3_AS"/>
</dbReference>
<dbReference type="InterPro" id="IPR001764">
    <property type="entry name" value="Glyco_hydro_3_N"/>
</dbReference>
<dbReference type="InterPro" id="IPR036962">
    <property type="entry name" value="Glyco_hydro_3_N_sf"/>
</dbReference>
<dbReference type="InterPro" id="IPR017853">
    <property type="entry name" value="Glycoside_hydrolase_SF"/>
</dbReference>
<dbReference type="InterPro" id="IPR050226">
    <property type="entry name" value="NagZ_Beta-hexosaminidase"/>
</dbReference>
<dbReference type="NCBIfam" id="NF003740">
    <property type="entry name" value="PRK05337.1"/>
    <property type="match status" value="1"/>
</dbReference>
<dbReference type="PANTHER" id="PTHR30480:SF13">
    <property type="entry name" value="BETA-HEXOSAMINIDASE"/>
    <property type="match status" value="1"/>
</dbReference>
<dbReference type="PANTHER" id="PTHR30480">
    <property type="entry name" value="BETA-HEXOSAMINIDASE-RELATED"/>
    <property type="match status" value="1"/>
</dbReference>
<dbReference type="Pfam" id="PF00933">
    <property type="entry name" value="Glyco_hydro_3"/>
    <property type="match status" value="1"/>
</dbReference>
<dbReference type="SUPFAM" id="SSF51445">
    <property type="entry name" value="(Trans)glycosidases"/>
    <property type="match status" value="1"/>
</dbReference>
<dbReference type="PROSITE" id="PS00775">
    <property type="entry name" value="GLYCOSYL_HYDROL_F3"/>
    <property type="match status" value="1"/>
</dbReference>
<name>NAGZ_SALA4</name>
<comment type="function">
    <text evidence="1">Plays a role in peptidoglycan recycling by cleaving the terminal beta-1,4-linked N-acetylglucosamine (GlcNAc) from peptide-linked peptidoglycan fragments, giving rise to free GlcNAc, anhydro-N-acetylmuramic acid and anhydro-N-acetylmuramic acid-linked peptides.</text>
</comment>
<comment type="catalytic activity">
    <reaction evidence="1">
        <text>Hydrolysis of terminal non-reducing N-acetyl-D-hexosamine residues in N-acetyl-beta-D-hexosaminides.</text>
        <dbReference type="EC" id="3.2.1.52"/>
    </reaction>
</comment>
<comment type="pathway">
    <text evidence="1">Cell wall biogenesis; peptidoglycan recycling.</text>
</comment>
<comment type="subcellular location">
    <subcellularLocation>
        <location evidence="1">Cytoplasm</location>
    </subcellularLocation>
</comment>
<comment type="similarity">
    <text evidence="1">Belongs to the glycosyl hydrolase 3 family. NagZ subfamily.</text>
</comment>
<sequence length="341" mass="37698">MGPVMLNVEGCELDAEEREILAHPLVGGLILFTRNYHDPEQLRELVRQIRAASRNHLVVAVDQEGGRVQRFREGFTRLPAAQSFFALHGLEEGGRLAQEAGWLMASEMIAMDIDISFAPVLDVGHISAAIGERSYHADPAKALAMATRFIDGMHDAGMKTTGKHFPGHGAVTADSHKETPCDPRPETDIRGKDMSVFRTLISENKLDAIMPAHVIYRAIDPRPASGSPYWLKTVLRQELGFDGVIFSDDLSMEGAAIMGSYAERAQASLDAGCDMILVCNNRKGAVSVLDNLSPIKAERVTRLYHKGSFSRRELMDSARWKTASAQLNQLHERWQEEKAGH</sequence>
<feature type="chain" id="PRO_1000121067" description="Beta-hexosaminidase">
    <location>
        <begin position="1"/>
        <end position="341"/>
    </location>
</feature>
<feature type="region of interest" description="Disordered" evidence="2">
    <location>
        <begin position="170"/>
        <end position="189"/>
    </location>
</feature>
<feature type="compositionally biased region" description="Basic and acidic residues" evidence="2">
    <location>
        <begin position="174"/>
        <end position="189"/>
    </location>
</feature>
<feature type="active site" description="Proton donor/acceptor" evidence="1">
    <location>
        <position position="176"/>
    </location>
</feature>
<feature type="active site" description="Nucleophile" evidence="1">
    <location>
        <position position="248"/>
    </location>
</feature>
<feature type="binding site" evidence="1">
    <location>
        <position position="62"/>
    </location>
    <ligand>
        <name>substrate</name>
    </ligand>
</feature>
<feature type="binding site" evidence="1">
    <location>
        <position position="70"/>
    </location>
    <ligand>
        <name>substrate</name>
    </ligand>
</feature>
<feature type="binding site" evidence="1">
    <location>
        <position position="133"/>
    </location>
    <ligand>
        <name>substrate</name>
    </ligand>
</feature>
<feature type="binding site" evidence="1">
    <location>
        <begin position="163"/>
        <end position="164"/>
    </location>
    <ligand>
        <name>substrate</name>
    </ligand>
</feature>
<feature type="site" description="Important for catalytic activity" evidence="1">
    <location>
        <position position="174"/>
    </location>
</feature>
<accession>B5F8E5</accession>
<reference key="1">
    <citation type="journal article" date="2011" name="J. Bacteriol.">
        <title>Comparative genomics of 28 Salmonella enterica isolates: evidence for CRISPR-mediated adaptive sublineage evolution.</title>
        <authorList>
            <person name="Fricke W.F."/>
            <person name="Mammel M.K."/>
            <person name="McDermott P.F."/>
            <person name="Tartera C."/>
            <person name="White D.G."/>
            <person name="Leclerc J.E."/>
            <person name="Ravel J."/>
            <person name="Cebula T.A."/>
        </authorList>
    </citation>
    <scope>NUCLEOTIDE SEQUENCE [LARGE SCALE GENOMIC DNA]</scope>
    <source>
        <strain>SL483</strain>
    </source>
</reference>
<gene>
    <name evidence="1" type="primary">nagZ</name>
    <name type="ordered locus">SeAg_B1976</name>
</gene>
<evidence type="ECO:0000255" key="1">
    <source>
        <dbReference type="HAMAP-Rule" id="MF_00364"/>
    </source>
</evidence>
<evidence type="ECO:0000256" key="2">
    <source>
        <dbReference type="SAM" id="MobiDB-lite"/>
    </source>
</evidence>
<keyword id="KW-0131">Cell cycle</keyword>
<keyword id="KW-0132">Cell division</keyword>
<keyword id="KW-0133">Cell shape</keyword>
<keyword id="KW-0961">Cell wall biogenesis/degradation</keyword>
<keyword id="KW-0963">Cytoplasm</keyword>
<keyword id="KW-0326">Glycosidase</keyword>
<keyword id="KW-0378">Hydrolase</keyword>
<keyword id="KW-0573">Peptidoglycan synthesis</keyword>
<protein>
    <recommendedName>
        <fullName evidence="1">Beta-hexosaminidase</fullName>
        <ecNumber evidence="1">3.2.1.52</ecNumber>
    </recommendedName>
    <alternativeName>
        <fullName evidence="1">Beta-N-acetylhexosaminidase</fullName>
    </alternativeName>
    <alternativeName>
        <fullName evidence="1">N-acetyl-beta-glucosaminidase</fullName>
    </alternativeName>
</protein>
<proteinExistence type="inferred from homology"/>
<organism>
    <name type="scientific">Salmonella agona (strain SL483)</name>
    <dbReference type="NCBI Taxonomy" id="454166"/>
    <lineage>
        <taxon>Bacteria</taxon>
        <taxon>Pseudomonadati</taxon>
        <taxon>Pseudomonadota</taxon>
        <taxon>Gammaproteobacteria</taxon>
        <taxon>Enterobacterales</taxon>
        <taxon>Enterobacteriaceae</taxon>
        <taxon>Salmonella</taxon>
    </lineage>
</organism>